<proteinExistence type="inferred from homology"/>
<keyword id="KW-0998">Cell outer membrane</keyword>
<keyword id="KW-0143">Chaperone</keyword>
<keyword id="KW-0449">Lipoprotein</keyword>
<keyword id="KW-0472">Membrane</keyword>
<keyword id="KW-0564">Palmitate</keyword>
<keyword id="KW-0653">Protein transport</keyword>
<keyword id="KW-1185">Reference proteome</keyword>
<keyword id="KW-0732">Signal</keyword>
<keyword id="KW-0813">Transport</keyword>
<protein>
    <recommendedName>
        <fullName evidence="1">Outer-membrane lipoprotein LolB</fullName>
    </recommendedName>
</protein>
<name>LOLB_PSEPK</name>
<accession>Q88PX4</accession>
<reference key="1">
    <citation type="journal article" date="2002" name="Environ. Microbiol.">
        <title>Complete genome sequence and comparative analysis of the metabolically versatile Pseudomonas putida KT2440.</title>
        <authorList>
            <person name="Nelson K.E."/>
            <person name="Weinel C."/>
            <person name="Paulsen I.T."/>
            <person name="Dodson R.J."/>
            <person name="Hilbert H."/>
            <person name="Martins dos Santos V.A.P."/>
            <person name="Fouts D.E."/>
            <person name="Gill S.R."/>
            <person name="Pop M."/>
            <person name="Holmes M."/>
            <person name="Brinkac L.M."/>
            <person name="Beanan M.J."/>
            <person name="DeBoy R.T."/>
            <person name="Daugherty S.C."/>
            <person name="Kolonay J.F."/>
            <person name="Madupu R."/>
            <person name="Nelson W.C."/>
            <person name="White O."/>
            <person name="Peterson J.D."/>
            <person name="Khouri H.M."/>
            <person name="Hance I."/>
            <person name="Chris Lee P."/>
            <person name="Holtzapple E.K."/>
            <person name="Scanlan D."/>
            <person name="Tran K."/>
            <person name="Moazzez A."/>
            <person name="Utterback T.R."/>
            <person name="Rizzo M."/>
            <person name="Lee K."/>
            <person name="Kosack D."/>
            <person name="Moestl D."/>
            <person name="Wedler H."/>
            <person name="Lauber J."/>
            <person name="Stjepandic D."/>
            <person name="Hoheisel J."/>
            <person name="Straetz M."/>
            <person name="Heim S."/>
            <person name="Kiewitz C."/>
            <person name="Eisen J.A."/>
            <person name="Timmis K.N."/>
            <person name="Duesterhoeft A."/>
            <person name="Tuemmler B."/>
            <person name="Fraser C.M."/>
        </authorList>
    </citation>
    <scope>NUCLEOTIDE SEQUENCE [LARGE SCALE GENOMIC DNA]</scope>
    <source>
        <strain>ATCC 47054 / DSM 6125 / CFBP 8728 / NCIMB 11950 / KT2440</strain>
    </source>
</reference>
<comment type="function">
    <text evidence="1">Plays a critical role in the incorporation of lipoproteins in the outer membrane after they are released by the LolA protein.</text>
</comment>
<comment type="subunit">
    <text evidence="1">Monomer.</text>
</comment>
<comment type="subcellular location">
    <subcellularLocation>
        <location evidence="1">Cell outer membrane</location>
        <topology evidence="1">Lipid-anchor</topology>
    </subcellularLocation>
</comment>
<comment type="similarity">
    <text evidence="1">Belongs to the LolB family.</text>
</comment>
<sequence length="205" mass="22895">MFLRHCITFTLIALLAGCAGFGSREALQGHGDPQQWRAHKAQLSSLDGWQINGKVGIRAPRDSGSGTLFWLQRQDYYDIRLAGPLGRGAARLTGRPGGVVLEVANQGRYEATSPEALLEEQLGWQLPVSHLVWWVRGLPAPDSKSKLTLDGDSRLASLDQDGWQVQYLSYTEQNGYWLPERLKLHGKDLDVTLVVKDWQPRQLGH</sequence>
<organism>
    <name type="scientific">Pseudomonas putida (strain ATCC 47054 / DSM 6125 / CFBP 8728 / NCIMB 11950 / KT2440)</name>
    <dbReference type="NCBI Taxonomy" id="160488"/>
    <lineage>
        <taxon>Bacteria</taxon>
        <taxon>Pseudomonadati</taxon>
        <taxon>Pseudomonadota</taxon>
        <taxon>Gammaproteobacteria</taxon>
        <taxon>Pseudomonadales</taxon>
        <taxon>Pseudomonadaceae</taxon>
        <taxon>Pseudomonas</taxon>
    </lineage>
</organism>
<gene>
    <name evidence="1" type="primary">lolB</name>
    <name type="ordered locus">PP_0724</name>
</gene>
<evidence type="ECO:0000255" key="1">
    <source>
        <dbReference type="HAMAP-Rule" id="MF_00233"/>
    </source>
</evidence>
<feature type="signal peptide" evidence="1">
    <location>
        <begin position="1"/>
        <end position="17"/>
    </location>
</feature>
<feature type="chain" id="PRO_0000018307" description="Outer-membrane lipoprotein LolB">
    <location>
        <begin position="18"/>
        <end position="205"/>
    </location>
</feature>
<feature type="lipid moiety-binding region" description="N-palmitoyl cysteine" evidence="1">
    <location>
        <position position="18"/>
    </location>
</feature>
<feature type="lipid moiety-binding region" description="S-diacylglycerol cysteine" evidence="1">
    <location>
        <position position="18"/>
    </location>
</feature>
<dbReference type="EMBL" id="AE015451">
    <property type="protein sequence ID" value="AAN66349.1"/>
    <property type="molecule type" value="Genomic_DNA"/>
</dbReference>
<dbReference type="RefSeq" id="NP_742885.1">
    <property type="nucleotide sequence ID" value="NC_002947.4"/>
</dbReference>
<dbReference type="RefSeq" id="WP_010951969.1">
    <property type="nucleotide sequence ID" value="NZ_CP169744.1"/>
</dbReference>
<dbReference type="SMR" id="Q88PX4"/>
<dbReference type="STRING" id="160488.PP_0724"/>
<dbReference type="PaxDb" id="160488-PP_0724"/>
<dbReference type="GeneID" id="83678073"/>
<dbReference type="KEGG" id="ppu:PP_0724"/>
<dbReference type="PATRIC" id="fig|160488.4.peg.773"/>
<dbReference type="eggNOG" id="COG3017">
    <property type="taxonomic scope" value="Bacteria"/>
</dbReference>
<dbReference type="HOGENOM" id="CLU_092816_2_1_6"/>
<dbReference type="OrthoDB" id="9797618at2"/>
<dbReference type="PhylomeDB" id="Q88PX4"/>
<dbReference type="BioCyc" id="PPUT160488:G1G01-799-MONOMER"/>
<dbReference type="Proteomes" id="UP000000556">
    <property type="component" value="Chromosome"/>
</dbReference>
<dbReference type="GO" id="GO:0009279">
    <property type="term" value="C:cell outer membrane"/>
    <property type="evidence" value="ECO:0007669"/>
    <property type="project" value="UniProtKB-SubCell"/>
</dbReference>
<dbReference type="GO" id="GO:0044874">
    <property type="term" value="P:lipoprotein localization to outer membrane"/>
    <property type="evidence" value="ECO:0007669"/>
    <property type="project" value="UniProtKB-UniRule"/>
</dbReference>
<dbReference type="GO" id="GO:0015031">
    <property type="term" value="P:protein transport"/>
    <property type="evidence" value="ECO:0007669"/>
    <property type="project" value="UniProtKB-KW"/>
</dbReference>
<dbReference type="CDD" id="cd16326">
    <property type="entry name" value="LolB"/>
    <property type="match status" value="1"/>
</dbReference>
<dbReference type="Gene3D" id="2.50.20.10">
    <property type="entry name" value="Lipoprotein localisation LolA/LolB/LppX"/>
    <property type="match status" value="1"/>
</dbReference>
<dbReference type="HAMAP" id="MF_00233">
    <property type="entry name" value="LolB"/>
    <property type="match status" value="1"/>
</dbReference>
<dbReference type="InterPro" id="IPR029046">
    <property type="entry name" value="LolA/LolB/LppX"/>
</dbReference>
<dbReference type="InterPro" id="IPR004565">
    <property type="entry name" value="OM_lipoprot_LolB"/>
</dbReference>
<dbReference type="NCBIfam" id="TIGR00548">
    <property type="entry name" value="lolB"/>
    <property type="match status" value="1"/>
</dbReference>
<dbReference type="Pfam" id="PF03550">
    <property type="entry name" value="LolB"/>
    <property type="match status" value="1"/>
</dbReference>
<dbReference type="SUPFAM" id="SSF89392">
    <property type="entry name" value="Prokaryotic lipoproteins and lipoprotein localization factors"/>
    <property type="match status" value="1"/>
</dbReference>
<dbReference type="PROSITE" id="PS51257">
    <property type="entry name" value="PROKAR_LIPOPROTEIN"/>
    <property type="match status" value="1"/>
</dbReference>